<reference key="1">
    <citation type="submission" date="2008-02" db="EMBL/GenBank/DDBJ databases">
        <title>Complete sequence of Yersinia pseudotuberculosis YPIII.</title>
        <authorList>
            <consortium name="US DOE Joint Genome Institute"/>
            <person name="Copeland A."/>
            <person name="Lucas S."/>
            <person name="Lapidus A."/>
            <person name="Glavina del Rio T."/>
            <person name="Dalin E."/>
            <person name="Tice H."/>
            <person name="Bruce D."/>
            <person name="Goodwin L."/>
            <person name="Pitluck S."/>
            <person name="Munk A.C."/>
            <person name="Brettin T."/>
            <person name="Detter J.C."/>
            <person name="Han C."/>
            <person name="Tapia R."/>
            <person name="Schmutz J."/>
            <person name="Larimer F."/>
            <person name="Land M."/>
            <person name="Hauser L."/>
            <person name="Challacombe J.F."/>
            <person name="Green L."/>
            <person name="Lindler L.E."/>
            <person name="Nikolich M.P."/>
            <person name="Richardson P."/>
        </authorList>
    </citation>
    <scope>NUCLEOTIDE SEQUENCE [LARGE SCALE GENOMIC DNA]</scope>
    <source>
        <strain>YPIII</strain>
    </source>
</reference>
<dbReference type="EMBL" id="CP000950">
    <property type="protein sequence ID" value="ACA68012.1"/>
    <property type="molecule type" value="Genomic_DNA"/>
</dbReference>
<dbReference type="RefSeq" id="WP_002210914.1">
    <property type="nucleotide sequence ID" value="NZ_CP009792.1"/>
</dbReference>
<dbReference type="SMR" id="B1JI66"/>
<dbReference type="GeneID" id="57976936"/>
<dbReference type="KEGG" id="ypy:YPK_1719"/>
<dbReference type="PATRIC" id="fig|502800.11.peg.2383"/>
<dbReference type="GO" id="GO:0005737">
    <property type="term" value="C:cytoplasm"/>
    <property type="evidence" value="ECO:0007669"/>
    <property type="project" value="UniProtKB-SubCell"/>
</dbReference>
<dbReference type="GO" id="GO:0005886">
    <property type="term" value="C:plasma membrane"/>
    <property type="evidence" value="ECO:0007669"/>
    <property type="project" value="UniProtKB-SubCell"/>
</dbReference>
<dbReference type="FunFam" id="1.10.3890.10:FF:000001">
    <property type="entry name" value="High frequency lysogenization protein HflD homolog"/>
    <property type="match status" value="1"/>
</dbReference>
<dbReference type="Gene3D" id="1.10.3890.10">
    <property type="entry name" value="HflD-like"/>
    <property type="match status" value="1"/>
</dbReference>
<dbReference type="HAMAP" id="MF_00695">
    <property type="entry name" value="HflD_protein"/>
    <property type="match status" value="1"/>
</dbReference>
<dbReference type="InterPro" id="IPR007451">
    <property type="entry name" value="HflD"/>
</dbReference>
<dbReference type="InterPro" id="IPR035932">
    <property type="entry name" value="HflD-like_sf"/>
</dbReference>
<dbReference type="NCBIfam" id="NF001246">
    <property type="entry name" value="PRK00218.1-2"/>
    <property type="match status" value="1"/>
</dbReference>
<dbReference type="NCBIfam" id="NF001248">
    <property type="entry name" value="PRK00218.1-4"/>
    <property type="match status" value="1"/>
</dbReference>
<dbReference type="NCBIfam" id="NF001249">
    <property type="entry name" value="PRK00218.1-5"/>
    <property type="match status" value="1"/>
</dbReference>
<dbReference type="PANTHER" id="PTHR38100">
    <property type="entry name" value="HIGH FREQUENCY LYSOGENIZATION PROTEIN HFLD"/>
    <property type="match status" value="1"/>
</dbReference>
<dbReference type="PANTHER" id="PTHR38100:SF1">
    <property type="entry name" value="HIGH FREQUENCY LYSOGENIZATION PROTEIN HFLD"/>
    <property type="match status" value="1"/>
</dbReference>
<dbReference type="Pfam" id="PF04356">
    <property type="entry name" value="DUF489"/>
    <property type="match status" value="1"/>
</dbReference>
<dbReference type="SUPFAM" id="SSF101322">
    <property type="entry name" value="YcfC-like"/>
    <property type="match status" value="1"/>
</dbReference>
<organism>
    <name type="scientific">Yersinia pseudotuberculosis serotype O:3 (strain YPIII)</name>
    <dbReference type="NCBI Taxonomy" id="502800"/>
    <lineage>
        <taxon>Bacteria</taxon>
        <taxon>Pseudomonadati</taxon>
        <taxon>Pseudomonadota</taxon>
        <taxon>Gammaproteobacteria</taxon>
        <taxon>Enterobacterales</taxon>
        <taxon>Yersiniaceae</taxon>
        <taxon>Yersinia</taxon>
    </lineage>
</organism>
<name>HFLD_YERPY</name>
<sequence length="208" mass="22730">MAKNYYDITLALAGICQSARLVQQLAHEGQCDNDALNTVLRGLLQTNPSSTLAVYGDTEQVLKMGLETLQSVLNANRQGEAAELTRYTLSLMVLERKLSASKSAMNTLGERISQLDRQLAHFDLESETMMSSLASIYVDVVSPLGPRIQVTGSPAILQSPLVQAKVRATLLAGIRSAVLWQQVGGSRLQLMFSRNRLFKQAQSILAHT</sequence>
<protein>
    <recommendedName>
        <fullName evidence="1">High frequency lysogenization protein HflD homolog</fullName>
    </recommendedName>
</protein>
<keyword id="KW-0997">Cell inner membrane</keyword>
<keyword id="KW-1003">Cell membrane</keyword>
<keyword id="KW-0963">Cytoplasm</keyword>
<keyword id="KW-0472">Membrane</keyword>
<accession>B1JI66</accession>
<evidence type="ECO:0000255" key="1">
    <source>
        <dbReference type="HAMAP-Rule" id="MF_00695"/>
    </source>
</evidence>
<gene>
    <name evidence="1" type="primary">hflD</name>
    <name type="ordered locus">YPK_1719</name>
</gene>
<feature type="chain" id="PRO_1000132311" description="High frequency lysogenization protein HflD homolog">
    <location>
        <begin position="1"/>
        <end position="208"/>
    </location>
</feature>
<comment type="subcellular location">
    <subcellularLocation>
        <location>Cytoplasm</location>
    </subcellularLocation>
    <subcellularLocation>
        <location evidence="1">Cell inner membrane</location>
        <topology evidence="1">Peripheral membrane protein</topology>
        <orientation evidence="1">Cytoplasmic side</orientation>
    </subcellularLocation>
</comment>
<comment type="similarity">
    <text evidence="1">Belongs to the HflD family.</text>
</comment>
<proteinExistence type="inferred from homology"/>